<keyword id="KW-0256">Endoplasmic reticulum</keyword>
<keyword id="KW-0378">Hydrolase</keyword>
<keyword id="KW-0472">Membrane</keyword>
<keyword id="KW-0645">Protease</keyword>
<keyword id="KW-1185">Reference proteome</keyword>
<keyword id="KW-0812">Transmembrane</keyword>
<keyword id="KW-1133">Transmembrane helix</keyword>
<sequence length="266" mass="30917">MGAGLVSACLPISYVLLVHLFDRNGTDRNDPESVKRRFKGALLSNFVSIVVTAFYLRDYTDSPMLEMGVRWDNIGQSITYPFILMNAFYLGQFVMMQIDRTLWHYFDWYEWKLCFNSWVWRRDIIVGPITEEIVFRACSSTLMAHVYGPTMTILLNPIPFAASHFHHIWDDQRRGYSLAHSILQRGFQFCYTYLFGAFATWLQLTTRHAIVPIIAHAFCNAQGLPLWLEIPNYPKRRDRLTLYAAYSVGFAAFVHLLYTRNGMPTP</sequence>
<protein>
    <recommendedName>
        <fullName evidence="6">CAAX prenyl protease 2</fullName>
        <ecNumber evidence="4">3.4.26.1</ecNumber>
    </recommendedName>
    <alternativeName>
        <fullName evidence="5">Farnesylated proteins-converting enzyme 2</fullName>
        <shortName evidence="5">FACE-2</shortName>
    </alternativeName>
</protein>
<name>FACE2_CAEEL</name>
<gene>
    <name evidence="9" type="primary">fce-2</name>
    <name evidence="9" type="ORF">F48F5.5</name>
</gene>
<feature type="chain" id="PRO_0000431786" description="CAAX prenyl protease 2" evidence="6">
    <location>
        <begin position="1"/>
        <end position="266"/>
    </location>
</feature>
<feature type="transmembrane region" description="Helical" evidence="3">
    <location>
        <begin position="1"/>
        <end position="21"/>
    </location>
</feature>
<feature type="transmembrane region" description="Helical" evidence="3">
    <location>
        <begin position="42"/>
        <end position="59"/>
    </location>
</feature>
<feature type="transmembrane region" description="Helical" evidence="3">
    <location>
        <begin position="78"/>
        <end position="98"/>
    </location>
</feature>
<feature type="transmembrane region" description="Helical" evidence="3">
    <location>
        <begin position="186"/>
        <end position="206"/>
    </location>
</feature>
<feature type="transmembrane region" description="Helical" evidence="3">
    <location>
        <begin position="210"/>
        <end position="230"/>
    </location>
</feature>
<feature type="transmembrane region" description="Helical" evidence="3">
    <location>
        <begin position="239"/>
        <end position="259"/>
    </location>
</feature>
<feature type="active site" description="Proton donor/acceptor" evidence="1">
    <location>
        <position position="131"/>
    </location>
</feature>
<feature type="active site" description="Proton donor/acceptor" evidence="1">
    <location>
        <position position="164"/>
    </location>
</feature>
<feature type="site" description="Transition state stabilizer" evidence="1">
    <location>
        <position position="216"/>
    </location>
</feature>
<feature type="site" description="Transition state stabilizer" evidence="1">
    <location>
        <position position="220"/>
    </location>
</feature>
<comment type="function">
    <text evidence="4">Protease involved in the processing of a variety of prenylated proteins containing the C-terminal CAAX motif, where C is a cysteine modified with an isoprenoid lipid, A is an aliphatic amino acid and X is any C-terminal amino acid. Proteolytically removes the C-terminal three residues of farnesylated and geranylated proteins, leaving the prenylated cysteine as the new C-terminus.</text>
</comment>
<comment type="catalytic activity">
    <reaction evidence="4">
        <text>Hydrolyzes the peptide bond -P2-(S-farnesyl or geranylgeranyl)C-P1'-P2'-P3'-COOH where P1' and P2' are amino acids with aliphatic sidechains and P3' is any C-terminal residue.</text>
        <dbReference type="EC" id="3.4.26.1"/>
    </reaction>
</comment>
<comment type="subcellular location">
    <subcellularLocation>
        <location evidence="2">Endoplasmic reticulum membrane</location>
        <topology evidence="3">Multi-pass membrane protein</topology>
    </subcellularLocation>
    <subcellularLocation>
        <location evidence="4">Membrane</location>
    </subcellularLocation>
</comment>
<comment type="similarity">
    <text evidence="6">Belongs to the peptidase U48 family.</text>
</comment>
<proteinExistence type="evidence at protein level"/>
<evidence type="ECO:0000250" key="1">
    <source>
        <dbReference type="UniProtKB" id="Q6LZY8"/>
    </source>
</evidence>
<evidence type="ECO:0000250" key="2">
    <source>
        <dbReference type="UniProtKB" id="Q9Y256"/>
    </source>
</evidence>
<evidence type="ECO:0000255" key="3"/>
<evidence type="ECO:0000269" key="4">
    <source>
    </source>
</evidence>
<evidence type="ECO:0000303" key="5">
    <source>
    </source>
</evidence>
<evidence type="ECO:0000305" key="6"/>
<evidence type="ECO:0000312" key="7">
    <source>
        <dbReference type="EMBL" id="CAD31791.1"/>
    </source>
</evidence>
<evidence type="ECO:0000312" key="8">
    <source>
        <dbReference type="Proteomes" id="UP000001940"/>
    </source>
</evidence>
<evidence type="ECO:0000312" key="9">
    <source>
        <dbReference type="WormBase" id="F48F5.5"/>
    </source>
</evidence>
<accession>G5EEP3</accession>
<dbReference type="EC" id="3.4.26.1" evidence="4"/>
<dbReference type="EMBL" id="AJ487543">
    <property type="protein sequence ID" value="CAD31791.1"/>
    <property type="molecule type" value="mRNA"/>
</dbReference>
<dbReference type="EMBL" id="Z81541">
    <property type="protein sequence ID" value="CAD91634.1"/>
    <property type="molecule type" value="Genomic_DNA"/>
</dbReference>
<dbReference type="RefSeq" id="NP_001023947.1">
    <property type="nucleotide sequence ID" value="NM_001028776.4"/>
</dbReference>
<dbReference type="FunCoup" id="G5EEP3">
    <property type="interactions" value="2496"/>
</dbReference>
<dbReference type="STRING" id="6239.F48F5.5.1"/>
<dbReference type="MEROPS" id="G05.003"/>
<dbReference type="PaxDb" id="6239-F48F5.5"/>
<dbReference type="EnsemblMetazoa" id="F48F5.5.1">
    <property type="protein sequence ID" value="F48F5.5.1"/>
    <property type="gene ID" value="WBGene00001406"/>
</dbReference>
<dbReference type="GeneID" id="3565253"/>
<dbReference type="KEGG" id="cel:CELE_F48F5.5"/>
<dbReference type="AGR" id="WB:WBGene00001406"/>
<dbReference type="CTD" id="3565253"/>
<dbReference type="WormBase" id="F48F5.5">
    <property type="protein sequence ID" value="CE34031"/>
    <property type="gene ID" value="WBGene00001406"/>
    <property type="gene designation" value="fce-2"/>
</dbReference>
<dbReference type="eggNOG" id="KOG4130">
    <property type="taxonomic scope" value="Eukaryota"/>
</dbReference>
<dbReference type="GeneTree" id="ENSGT00390000004124"/>
<dbReference type="HOGENOM" id="CLU_049909_3_0_1"/>
<dbReference type="InParanoid" id="G5EEP3"/>
<dbReference type="OMA" id="HSFCNWC"/>
<dbReference type="OrthoDB" id="271604at2759"/>
<dbReference type="PhylomeDB" id="G5EEP3"/>
<dbReference type="Reactome" id="R-CEL-5689880">
    <property type="pathway name" value="Ub-specific processing proteases"/>
</dbReference>
<dbReference type="Reactome" id="R-CEL-9648002">
    <property type="pathway name" value="RAS processing"/>
</dbReference>
<dbReference type="PRO" id="PR:G5EEP3"/>
<dbReference type="Proteomes" id="UP000001940">
    <property type="component" value="Chromosome V"/>
</dbReference>
<dbReference type="Bgee" id="WBGene00001406">
    <property type="expression patterns" value="Expressed in embryo and 3 other cell types or tissues"/>
</dbReference>
<dbReference type="GO" id="GO:0005789">
    <property type="term" value="C:endoplasmic reticulum membrane"/>
    <property type="evidence" value="ECO:0000318"/>
    <property type="project" value="GO_Central"/>
</dbReference>
<dbReference type="GO" id="GO:0016020">
    <property type="term" value="C:membrane"/>
    <property type="evidence" value="ECO:0000314"/>
    <property type="project" value="WormBase"/>
</dbReference>
<dbReference type="GO" id="GO:0004197">
    <property type="term" value="F:cysteine-type endopeptidase activity"/>
    <property type="evidence" value="ECO:0000314"/>
    <property type="project" value="WormBase"/>
</dbReference>
<dbReference type="GO" id="GO:0004222">
    <property type="term" value="F:metalloendopeptidase activity"/>
    <property type="evidence" value="ECO:0000318"/>
    <property type="project" value="GO_Central"/>
</dbReference>
<dbReference type="GO" id="GO:0071586">
    <property type="term" value="P:CAAX-box protein processing"/>
    <property type="evidence" value="ECO:0000314"/>
    <property type="project" value="WormBase"/>
</dbReference>
<dbReference type="InterPro" id="IPR039731">
    <property type="entry name" value="Rce1"/>
</dbReference>
<dbReference type="InterPro" id="IPR003675">
    <property type="entry name" value="Rce1/LyrA-like_dom"/>
</dbReference>
<dbReference type="PANTHER" id="PTHR13046:SF0">
    <property type="entry name" value="CAAX PRENYL PROTEASE 2"/>
    <property type="match status" value="1"/>
</dbReference>
<dbReference type="PANTHER" id="PTHR13046">
    <property type="entry name" value="PROTEASE U48 CAAX PRENYL PROTEASE RCE1"/>
    <property type="match status" value="1"/>
</dbReference>
<dbReference type="Pfam" id="PF02517">
    <property type="entry name" value="Rce1-like"/>
    <property type="match status" value="1"/>
</dbReference>
<organism evidence="8">
    <name type="scientific">Caenorhabditis elegans</name>
    <dbReference type="NCBI Taxonomy" id="6239"/>
    <lineage>
        <taxon>Eukaryota</taxon>
        <taxon>Metazoa</taxon>
        <taxon>Ecdysozoa</taxon>
        <taxon>Nematoda</taxon>
        <taxon>Chromadorea</taxon>
        <taxon>Rhabditida</taxon>
        <taxon>Rhabditina</taxon>
        <taxon>Rhabditomorpha</taxon>
        <taxon>Rhabditoidea</taxon>
        <taxon>Rhabditidae</taxon>
        <taxon>Peloderinae</taxon>
        <taxon>Caenorhabditis</taxon>
    </lineage>
</organism>
<reference evidence="7" key="1">
    <citation type="journal article" date="2003" name="Biochem. J.">
        <title>Identification, functional expression and enzymic analysis of two distinct CaaX proteases from Caenorhabditis elegans.</title>
        <authorList>
            <person name="Cadinanos J."/>
            <person name="Schmidt W.K."/>
            <person name="Fueyo A."/>
            <person name="Varela I."/>
            <person name="Lopez-Otin C."/>
            <person name="Freije J.M.P."/>
        </authorList>
    </citation>
    <scope>NUCLEOTIDE SEQUENCE [MRNA]</scope>
    <scope>FUNCTION</scope>
    <scope>CATALYTIC ACTIVITY</scope>
    <scope>SUBCELLULAR LOCATION</scope>
</reference>
<reference evidence="8" key="2">
    <citation type="journal article" date="1998" name="Science">
        <title>Genome sequence of the nematode C. elegans: a platform for investigating biology.</title>
        <authorList>
            <consortium name="The C. elegans sequencing consortium"/>
        </authorList>
    </citation>
    <scope>NUCLEOTIDE SEQUENCE [LARGE SCALE GENOMIC DNA]</scope>
    <source>
        <strain evidence="8">Bristol N2</strain>
    </source>
</reference>